<organism>
    <name type="scientific">Oryza sativa subsp. indica</name>
    <name type="common">Rice</name>
    <dbReference type="NCBI Taxonomy" id="39946"/>
    <lineage>
        <taxon>Eukaryota</taxon>
        <taxon>Viridiplantae</taxon>
        <taxon>Streptophyta</taxon>
        <taxon>Embryophyta</taxon>
        <taxon>Tracheophyta</taxon>
        <taxon>Spermatophyta</taxon>
        <taxon>Magnoliopsida</taxon>
        <taxon>Liliopsida</taxon>
        <taxon>Poales</taxon>
        <taxon>Poaceae</taxon>
        <taxon>BOP clade</taxon>
        <taxon>Oryzoideae</taxon>
        <taxon>Oryzeae</taxon>
        <taxon>Oryzinae</taxon>
        <taxon>Oryza</taxon>
        <taxon>Oryza sativa</taxon>
    </lineage>
</organism>
<gene>
    <name type="primary">PLP3</name>
    <name type="ORF">OsI_24874</name>
</gene>
<feature type="chain" id="PRO_0000425827" description="Patatin-like protein 3">
    <location>
        <begin position="1"/>
        <end position="413"/>
    </location>
</feature>
<feature type="domain" description="PNPLA" evidence="3">
    <location>
        <begin position="54"/>
        <end position="245"/>
    </location>
</feature>
<feature type="region of interest" description="Disordered" evidence="4">
    <location>
        <begin position="384"/>
        <end position="413"/>
    </location>
</feature>
<feature type="short sequence motif" description="GGXR">
    <location>
        <begin position="58"/>
        <end position="61"/>
    </location>
</feature>
<feature type="active site" description="Nucleophile" evidence="2">
    <location>
        <position position="100"/>
    </location>
</feature>
<dbReference type="EC" id="3.1.1.-"/>
<dbReference type="EMBL" id="CM000132">
    <property type="protein sequence ID" value="EEC81509.1"/>
    <property type="molecule type" value="Genomic_DNA"/>
</dbReference>
<dbReference type="SMR" id="B8B7E7"/>
<dbReference type="STRING" id="39946.B8B7E7"/>
<dbReference type="EnsemblPlants" id="BGIOSGA025139-TA">
    <property type="protein sequence ID" value="BGIOSGA025139-PA"/>
    <property type="gene ID" value="BGIOSGA025139"/>
</dbReference>
<dbReference type="Gramene" id="BGIOSGA025139-TA">
    <property type="protein sequence ID" value="BGIOSGA025139-PA"/>
    <property type="gene ID" value="BGIOSGA025139"/>
</dbReference>
<dbReference type="HOGENOM" id="CLU_000288_144_1_1"/>
<dbReference type="OMA" id="RPMYSAD"/>
<dbReference type="Proteomes" id="UP000007015">
    <property type="component" value="Chromosome 7"/>
</dbReference>
<dbReference type="GO" id="GO:0016787">
    <property type="term" value="F:hydrolase activity"/>
    <property type="evidence" value="ECO:0007669"/>
    <property type="project" value="UniProtKB-KW"/>
</dbReference>
<dbReference type="GO" id="GO:0006952">
    <property type="term" value="P:defense response"/>
    <property type="evidence" value="ECO:0007669"/>
    <property type="project" value="UniProtKB-KW"/>
</dbReference>
<dbReference type="GO" id="GO:0016042">
    <property type="term" value="P:lipid catabolic process"/>
    <property type="evidence" value="ECO:0007669"/>
    <property type="project" value="UniProtKB-KW"/>
</dbReference>
<dbReference type="CDD" id="cd07199">
    <property type="entry name" value="Pat17_PNPLA8_PNPLA9_like"/>
    <property type="match status" value="1"/>
</dbReference>
<dbReference type="Gene3D" id="3.40.1090.10">
    <property type="entry name" value="Cytosolic phospholipase A2 catalytic domain"/>
    <property type="match status" value="1"/>
</dbReference>
<dbReference type="InterPro" id="IPR016035">
    <property type="entry name" value="Acyl_Trfase/lysoPLipase"/>
</dbReference>
<dbReference type="InterPro" id="IPR002641">
    <property type="entry name" value="PNPLA_dom"/>
</dbReference>
<dbReference type="PANTHER" id="PTHR32241:SF8">
    <property type="entry name" value="PATATIN-LIKE PROTEIN 3"/>
    <property type="match status" value="1"/>
</dbReference>
<dbReference type="PANTHER" id="PTHR32241">
    <property type="entry name" value="PATATIN-LIKE PROTEIN 6"/>
    <property type="match status" value="1"/>
</dbReference>
<dbReference type="Pfam" id="PF01734">
    <property type="entry name" value="Patatin"/>
    <property type="match status" value="1"/>
</dbReference>
<dbReference type="SUPFAM" id="SSF52151">
    <property type="entry name" value="FabD/lysophospholipase-like"/>
    <property type="match status" value="1"/>
</dbReference>
<dbReference type="PROSITE" id="PS51635">
    <property type="entry name" value="PNPLA"/>
    <property type="match status" value="1"/>
</dbReference>
<evidence type="ECO:0000250" key="1"/>
<evidence type="ECO:0000255" key="2"/>
<evidence type="ECO:0000255" key="3">
    <source>
        <dbReference type="PROSITE-ProRule" id="PRU01161"/>
    </source>
</evidence>
<evidence type="ECO:0000256" key="4">
    <source>
        <dbReference type="SAM" id="MobiDB-lite"/>
    </source>
</evidence>
<evidence type="ECO:0000305" key="5"/>
<comment type="function">
    <text evidence="1">Possesses non-specific lipolytic acyl hydrolase (LAH) activity. Hydrolyzes phospholipids as well as galactolipids. May play a role in disease resistance (By similarity).</text>
</comment>
<comment type="domain">
    <text evidence="1">The nitrogen atoms of the two glycine residues in the GGXR motif define the oxyanion hole, and stabilize the oxyanion that forms during the nucleophilic attack by the catalytic serine during substrate cleavage.</text>
</comment>
<comment type="similarity">
    <text evidence="5">Belongs to the patatin family.</text>
</comment>
<comment type="caution">
    <text evidence="5">Lacks the conserved Asp residue expected to act as the active site proton acceptor.</text>
</comment>
<accession>B8B7E7</accession>
<name>PLP3_ORYSI</name>
<sequence length="413" mass="43029">MEAGQDDAADRLTYEIFSILESKFLFGYGGGGGGETKSLQCAPPVSRGNRVCVLSVDGGARPEDGLLAAAALVRLEAAVQRRAGSKAARLADFFDVAAGSGAGGVLAAMLFARGPCGRPMYSADDALGFLLRRVRRRGWSSRAGGLLRRPAGAFHKVFGELTLRDTVRPVLVPCYDLATRAPFLFSRADAAQSPAYDFRLRDACAATCAPSGGGAAVEASSVDGVTRITAVGSGVALGNPTAAAITHVLNNRREFPAAAGVDNLLVISIGTGEAAGSSSRHRARTPVIARIAAEGASDMVDQAVAMAFGQHRTSNYVRIQGMGVARRRGGGVACGGETAEKAVWVAEAMLQQRNVEAVMFQGRRLAGETNAEKVERFARELIKEHGRRKQHVPPAASGGGGGGLDCHVSKKQP</sequence>
<protein>
    <recommendedName>
        <fullName>Patatin-like protein 3</fullName>
        <ecNumber>3.1.1.-</ecNumber>
    </recommendedName>
</protein>
<keyword id="KW-0378">Hydrolase</keyword>
<keyword id="KW-0442">Lipid degradation</keyword>
<keyword id="KW-0443">Lipid metabolism</keyword>
<keyword id="KW-0611">Plant defense</keyword>
<keyword id="KW-1185">Reference proteome</keyword>
<reference key="1">
    <citation type="journal article" date="2005" name="PLoS Biol.">
        <title>The genomes of Oryza sativa: a history of duplications.</title>
        <authorList>
            <person name="Yu J."/>
            <person name="Wang J."/>
            <person name="Lin W."/>
            <person name="Li S."/>
            <person name="Li H."/>
            <person name="Zhou J."/>
            <person name="Ni P."/>
            <person name="Dong W."/>
            <person name="Hu S."/>
            <person name="Zeng C."/>
            <person name="Zhang J."/>
            <person name="Zhang Y."/>
            <person name="Li R."/>
            <person name="Xu Z."/>
            <person name="Li S."/>
            <person name="Li X."/>
            <person name="Zheng H."/>
            <person name="Cong L."/>
            <person name="Lin L."/>
            <person name="Yin J."/>
            <person name="Geng J."/>
            <person name="Li G."/>
            <person name="Shi J."/>
            <person name="Liu J."/>
            <person name="Lv H."/>
            <person name="Li J."/>
            <person name="Wang J."/>
            <person name="Deng Y."/>
            <person name="Ran L."/>
            <person name="Shi X."/>
            <person name="Wang X."/>
            <person name="Wu Q."/>
            <person name="Li C."/>
            <person name="Ren X."/>
            <person name="Wang J."/>
            <person name="Wang X."/>
            <person name="Li D."/>
            <person name="Liu D."/>
            <person name="Zhang X."/>
            <person name="Ji Z."/>
            <person name="Zhao W."/>
            <person name="Sun Y."/>
            <person name="Zhang Z."/>
            <person name="Bao J."/>
            <person name="Han Y."/>
            <person name="Dong L."/>
            <person name="Ji J."/>
            <person name="Chen P."/>
            <person name="Wu S."/>
            <person name="Liu J."/>
            <person name="Xiao Y."/>
            <person name="Bu D."/>
            <person name="Tan J."/>
            <person name="Yang L."/>
            <person name="Ye C."/>
            <person name="Zhang J."/>
            <person name="Xu J."/>
            <person name="Zhou Y."/>
            <person name="Yu Y."/>
            <person name="Zhang B."/>
            <person name="Zhuang S."/>
            <person name="Wei H."/>
            <person name="Liu B."/>
            <person name="Lei M."/>
            <person name="Yu H."/>
            <person name="Li Y."/>
            <person name="Xu H."/>
            <person name="Wei S."/>
            <person name="He X."/>
            <person name="Fang L."/>
            <person name="Zhang Z."/>
            <person name="Zhang Y."/>
            <person name="Huang X."/>
            <person name="Su Z."/>
            <person name="Tong W."/>
            <person name="Li J."/>
            <person name="Tong Z."/>
            <person name="Li S."/>
            <person name="Ye J."/>
            <person name="Wang L."/>
            <person name="Fang L."/>
            <person name="Lei T."/>
            <person name="Chen C.-S."/>
            <person name="Chen H.-C."/>
            <person name="Xu Z."/>
            <person name="Li H."/>
            <person name="Huang H."/>
            <person name="Zhang F."/>
            <person name="Xu H."/>
            <person name="Li N."/>
            <person name="Zhao C."/>
            <person name="Li S."/>
            <person name="Dong L."/>
            <person name="Huang Y."/>
            <person name="Li L."/>
            <person name="Xi Y."/>
            <person name="Qi Q."/>
            <person name="Li W."/>
            <person name="Zhang B."/>
            <person name="Hu W."/>
            <person name="Zhang Y."/>
            <person name="Tian X."/>
            <person name="Jiao Y."/>
            <person name="Liang X."/>
            <person name="Jin J."/>
            <person name="Gao L."/>
            <person name="Zheng W."/>
            <person name="Hao B."/>
            <person name="Liu S.-M."/>
            <person name="Wang W."/>
            <person name="Yuan L."/>
            <person name="Cao M."/>
            <person name="McDermott J."/>
            <person name="Samudrala R."/>
            <person name="Wang J."/>
            <person name="Wong G.K.-S."/>
            <person name="Yang H."/>
        </authorList>
    </citation>
    <scope>NUCLEOTIDE SEQUENCE [LARGE SCALE GENOMIC DNA]</scope>
    <source>
        <strain>cv. 93-11</strain>
    </source>
</reference>
<proteinExistence type="inferred from homology"/>